<reference key="1">
    <citation type="journal article" date="2005" name="Proc. Natl. Acad. Sci. U.S.A.">
        <title>The viral polymerase mediates adaptation of an avian influenza virus to a mammalian host.</title>
        <authorList>
            <person name="Gabriel G."/>
            <person name="Dauber B."/>
            <person name="Wolff T."/>
            <person name="Planz O."/>
            <person name="Klenk H.D."/>
            <person name="Stech J."/>
        </authorList>
    </citation>
    <scope>NUCLEOTIDE SEQUENCE [GENOMIC RNA]</scope>
    <source>
        <strain>SC35M mouse adapted</strain>
    </source>
</reference>
<keyword id="KW-0025">Alternative splicing</keyword>
<keyword id="KW-1262">Eukaryotic host gene expression shutoff by virus</keyword>
<keyword id="KW-1035">Host cytoplasm</keyword>
<keyword id="KW-1190">Host gene expression shutoff by virus</keyword>
<keyword id="KW-1192">Host mRNA suppression by virus</keyword>
<keyword id="KW-1048">Host nucleus</keyword>
<keyword id="KW-0945">Host-virus interaction</keyword>
<keyword id="KW-1090">Inhibition of host innate immune response by virus</keyword>
<keyword id="KW-1114">Inhibition of host interferon signaling pathway by virus</keyword>
<keyword id="KW-1102">Inhibition of host PKR by virus</keyword>
<keyword id="KW-1103">Inhibition of host pre-mRNA processing by virus</keyword>
<keyword id="KW-1088">Inhibition of host RIG-I by virus</keyword>
<keyword id="KW-1113">Inhibition of host RLR pathway by virus</keyword>
<keyword id="KW-0922">Interferon antiviral system evasion</keyword>
<keyword id="KW-0694">RNA-binding</keyword>
<keyword id="KW-0832">Ubl conjugation</keyword>
<keyword id="KW-0899">Viral immunoevasion</keyword>
<name>NS1_I80A2</name>
<sequence length="230" mass="26100">MDSNTVSSFQVDCFLWHVRKRFADQELGDAPFLDRLRRDQKSLRGRGSTLGLDIETATRAGKQIVERILKEESDEALKMTIASVPASRYLTDMTLEEMSRDWFMLMPKQKVAGSLCIRMDQAIMDKNIMLKANFSVIFDRLETLILLRAFTEEGAIVGEISPLPSLPGHTDEDVKNAIGVLIGGLEWNDNTVRVSETLQRFAWRSSNEDGRPPLPPKQKRKMARTIESEV</sequence>
<comment type="function">
    <text evidence="1">Inhibits post-transcriptional processing of cellular pre-mRNA, by binding and inhibiting two cellular proteins that are required for the 3'-end processing of cellular pre-mRNAs: the 30 kDa cleavage and polyadenylation specificity factor/CPSF4 and the poly(A)-binding protein 2/PABPN1. In turn, unprocessed 3' end pre-mRNAs accumulate in the host nucleus and are no longer exported to the cytoplasm. Cellular protein synthesis is thereby shut off very early after virus infection. Viral protein synthesis is not affected by the inhibition of the cellular 3' end processing machinery because the poly(A) tails of viral mRNAs are produced by the viral polymerase through a stuttering mechanism. Prevents the establishment of the cellular antiviral state by inhibiting TRIM25-mediated RIGI ubiquitination, which normally triggers the antiviral transduction signal that leads to the activation of type I IFN genes by transcription factors IRF3 and IRF7. Also binds poly(A) and U6 snRNA. Inhibits the integrated stress response (ISR) in the infected cell by blocking dsRNA binding by EIF2AK2/PKR and further phosphorylation of EIF2S1/EIF-2ALPHA. Stress granule formation is thus inhibited, which allows protein synthesis and viral replication.</text>
</comment>
<comment type="subunit">
    <text evidence="1">Homodimer. Interacts with host TRIM25 (via coiled coil); this interaction specifically inhibits TRIM25 multimerization and TRIM25-mediated RIGI CARD ubiquitination. Interacts with human EIF2AK2/PKR, CPSF4, IVNS1ABP and PABPN1.</text>
</comment>
<comment type="subcellular location">
    <subcellularLocation>
        <location evidence="1">Host nucleus</location>
    </subcellularLocation>
    <subcellularLocation>
        <location evidence="1">Host cytoplasm</location>
    </subcellularLocation>
    <text evidence="1">In uninfected, transfected cells, NS1 is localized in the nucleus. Only in virus infected cells, the nuclear export signal is unveiled, presumably by a viral protein, and a fraction of NS1 is exported in the cytoplasm.</text>
</comment>
<comment type="alternative products">
    <event type="alternative splicing"/>
    <isoform>
        <id>Q2VC87-1</id>
        <name>NS1</name>
        <sequence type="displayed"/>
    </isoform>
    <isoform>
        <id>Q2VC88-1</id>
        <name>NEP</name>
        <name>NS2</name>
        <sequence type="external"/>
    </isoform>
</comment>
<comment type="domain">
    <text evidence="1">The dsRNA-binding region is required for suppression of RNA silencing.</text>
</comment>
<comment type="PTM">
    <text evidence="1">Upon interferon induction, ISGylated via host HERC5; this results in the impairment of NS1 interaction with RNA targets due to its inability to form homodimers and to interact with host EIF2AK2/PKR.</text>
</comment>
<comment type="miscellaneous">
    <text>SC35 was derived from A/Seal/Massachussetts/1/80 (H7N7) by serial passages in chicken embryo cells, thereby acquiring a multibasic cleavage site in its hemagglutinin (HA) and becoming 100% lethal for chickens. SC35 was then passaged 11 times in mouse lung, yielding the mouse-adapted variant SC35M.</text>
</comment>
<comment type="similarity">
    <text evidence="1">Belongs to the influenza A viruses NS1 family.</text>
</comment>
<proteinExistence type="inferred from homology"/>
<organism>
    <name type="scientific">Influenza A virus (strain A/Seal/Massachusetts/1/1980 H7N7)</name>
    <dbReference type="NCBI Taxonomy" id="384493"/>
    <lineage>
        <taxon>Viruses</taxon>
        <taxon>Riboviria</taxon>
        <taxon>Orthornavirae</taxon>
        <taxon>Negarnaviricota</taxon>
        <taxon>Polyploviricotina</taxon>
        <taxon>Insthoviricetes</taxon>
        <taxon>Articulavirales</taxon>
        <taxon>Orthomyxoviridae</taxon>
        <taxon>Alphainfluenzavirus</taxon>
        <taxon>Alphainfluenzavirus influenzae</taxon>
        <taxon>Influenza A virus</taxon>
    </lineage>
</organism>
<dbReference type="EMBL" id="DQ266101">
    <property type="protein sequence ID" value="ABB90275.1"/>
    <property type="molecule type" value="Genomic_RNA"/>
</dbReference>
<dbReference type="SMR" id="Q2VC87"/>
<dbReference type="Proteomes" id="UP000008576">
    <property type="component" value="Genome"/>
</dbReference>
<dbReference type="GO" id="GO:0030430">
    <property type="term" value="C:host cell cytoplasm"/>
    <property type="evidence" value="ECO:0007669"/>
    <property type="project" value="UniProtKB-SubCell"/>
</dbReference>
<dbReference type="GO" id="GO:0042025">
    <property type="term" value="C:host cell nucleus"/>
    <property type="evidence" value="ECO:0007669"/>
    <property type="project" value="UniProtKB-SubCell"/>
</dbReference>
<dbReference type="GO" id="GO:0030291">
    <property type="term" value="F:protein serine/threonine kinase inhibitor activity"/>
    <property type="evidence" value="ECO:0007669"/>
    <property type="project" value="UniProtKB-KW"/>
</dbReference>
<dbReference type="GO" id="GO:0003723">
    <property type="term" value="F:RNA binding"/>
    <property type="evidence" value="ECO:0007669"/>
    <property type="project" value="UniProtKB-KW"/>
</dbReference>
<dbReference type="GO" id="GO:0039540">
    <property type="term" value="P:symbiont-mediated suppression of host cytoplasmic pattern recognition receptor signaling pathway via inhibition of RIG-I activity"/>
    <property type="evidence" value="ECO:0007669"/>
    <property type="project" value="UniProtKB-KW"/>
</dbReference>
<dbReference type="GO" id="GO:0039657">
    <property type="term" value="P:symbiont-mediated suppression of host gene expression"/>
    <property type="evidence" value="ECO:0007669"/>
    <property type="project" value="UniProtKB-KW"/>
</dbReference>
<dbReference type="GO" id="GO:0039524">
    <property type="term" value="P:symbiont-mediated suppression of host mRNA processing"/>
    <property type="evidence" value="ECO:0007669"/>
    <property type="project" value="UniProtKB-KW"/>
</dbReference>
<dbReference type="GO" id="GO:0039580">
    <property type="term" value="P:symbiont-mediated suppression of host PKR/eIFalpha signaling"/>
    <property type="evidence" value="ECO:0007669"/>
    <property type="project" value="UniProtKB-KW"/>
</dbReference>
<dbReference type="GO" id="GO:0039502">
    <property type="term" value="P:symbiont-mediated suppression of host type I interferon-mediated signaling pathway"/>
    <property type="evidence" value="ECO:0007669"/>
    <property type="project" value="UniProtKB-KW"/>
</dbReference>
<dbReference type="FunFam" id="1.10.287.10:FF:000001">
    <property type="entry name" value="Non-structural protein 1"/>
    <property type="match status" value="1"/>
</dbReference>
<dbReference type="FunFam" id="3.30.420.330:FF:000001">
    <property type="entry name" value="Non-structural protein 1"/>
    <property type="match status" value="1"/>
</dbReference>
<dbReference type="Gene3D" id="3.30.420.330">
    <property type="entry name" value="Influenza virus non-structural protein, effector domain"/>
    <property type="match status" value="1"/>
</dbReference>
<dbReference type="Gene3D" id="1.10.287.10">
    <property type="entry name" value="S15/NS1, RNA-binding"/>
    <property type="match status" value="1"/>
</dbReference>
<dbReference type="HAMAP" id="MF_04066">
    <property type="entry name" value="INFV_NS1"/>
    <property type="match status" value="1"/>
</dbReference>
<dbReference type="InterPro" id="IPR004208">
    <property type="entry name" value="NS1"/>
</dbReference>
<dbReference type="InterPro" id="IPR000256">
    <property type="entry name" value="NS1A"/>
</dbReference>
<dbReference type="InterPro" id="IPR038064">
    <property type="entry name" value="NS1A_effect_dom-like_sf"/>
</dbReference>
<dbReference type="InterPro" id="IPR009068">
    <property type="entry name" value="uS15_NS1_RNA-bd_sf"/>
</dbReference>
<dbReference type="Pfam" id="PF00600">
    <property type="entry name" value="Flu_NS1"/>
    <property type="match status" value="1"/>
</dbReference>
<dbReference type="SUPFAM" id="SSF143021">
    <property type="entry name" value="Ns1 effector domain-like"/>
    <property type="match status" value="1"/>
</dbReference>
<dbReference type="SUPFAM" id="SSF47060">
    <property type="entry name" value="S15/NS1 RNA-binding domain"/>
    <property type="match status" value="1"/>
</dbReference>
<accession>Q2VC87</accession>
<gene>
    <name evidence="1" type="primary">NS</name>
</gene>
<protein>
    <recommendedName>
        <fullName evidence="1">Non-structural protein 1</fullName>
        <shortName evidence="1">NS1</shortName>
    </recommendedName>
    <alternativeName>
        <fullName evidence="1">NS1A</fullName>
    </alternativeName>
</protein>
<organismHost>
    <name type="scientific">Aves</name>
    <dbReference type="NCBI Taxonomy" id="8782"/>
</organismHost>
<organismHost>
    <name type="scientific">Equus caballus</name>
    <name type="common">Horse</name>
    <dbReference type="NCBI Taxonomy" id="9796"/>
</organismHost>
<organismHost>
    <name type="scientific">Homo sapiens</name>
    <name type="common">Human</name>
    <dbReference type="NCBI Taxonomy" id="9606"/>
</organismHost>
<organismHost>
    <name type="scientific">Phocidae</name>
    <name type="common">true seals</name>
    <dbReference type="NCBI Taxonomy" id="9709"/>
</organismHost>
<evidence type="ECO:0000255" key="1">
    <source>
        <dbReference type="HAMAP-Rule" id="MF_04066"/>
    </source>
</evidence>
<evidence type="ECO:0000256" key="2">
    <source>
        <dbReference type="SAM" id="MobiDB-lite"/>
    </source>
</evidence>
<feature type="chain" id="PRO_0000324266" description="Non-structural protein 1">
    <location>
        <begin position="1"/>
        <end position="230"/>
    </location>
</feature>
<feature type="region of interest" description="RNA-binding and homodimerization" evidence="1">
    <location>
        <begin position="1"/>
        <end position="73"/>
    </location>
</feature>
<feature type="region of interest" description="CPSF4-binding" evidence="1">
    <location>
        <begin position="180"/>
        <end position="215"/>
    </location>
</feature>
<feature type="region of interest" description="Disordered" evidence="2">
    <location>
        <begin position="205"/>
        <end position="230"/>
    </location>
</feature>
<feature type="region of interest" description="PABPN1-binding" evidence="1">
    <location>
        <begin position="223"/>
        <end position="230"/>
    </location>
</feature>
<feature type="short sequence motif" description="Nuclear localization signal" evidence="1">
    <location>
        <begin position="34"/>
        <end position="38"/>
    </location>
</feature>
<feature type="short sequence motif" description="Nuclear export signal" evidence="1">
    <location>
        <begin position="137"/>
        <end position="146"/>
    </location>
</feature>